<protein>
    <recommendedName>
        <fullName>Dihydroorotate dehydrogenase B (NAD(+)), catalytic subunit</fullName>
        <shortName>DHOD B</shortName>
        <shortName>DHODase B</shortName>
        <shortName>DHOdehase B</shortName>
        <ecNumber>1.3.1.14</ecNumber>
    </recommendedName>
    <alternativeName>
        <fullName>Dihydroorotate oxidase B</fullName>
    </alternativeName>
    <alternativeName>
        <fullName>Orotate reductase (NADH)</fullName>
    </alternativeName>
</protein>
<evidence type="ECO:0000250" key="1"/>
<evidence type="ECO:0000305" key="2"/>
<accession>Q8PW56</accession>
<sequence>MQKLPAGRKRSYLMYTLTGLKLKNPTILAAGVLGTTGASLCRVAREGGAGAVVTKSIGPAPKTGHPNPSMIELDCGFLNAMGLPNPSYPGFLQELEFAKENSDAPVIASIFGGTPSEFAEVAEGLLPAKPDAFELNVSCPHAEGYGAAIGSNPCLVEAVTAAVKDVVNVPVWVKLTPNVADITCIGNAAESGGADAVVAINTVKGMAIDIESGYPVLGNRSGGLSGKAVKPVAVKCVYDLFTALEIPVIGVGGVSSWEDAVEMIMAGAAAVQVGSAVYDRVGIFSEIGKGIEAFLKRKGYSDIKKITGLAHEMV</sequence>
<feature type="chain" id="PRO_0000148410" description="Dihydroorotate dehydrogenase B (NAD(+)), catalytic subunit">
    <location>
        <begin position="1"/>
        <end position="314"/>
    </location>
</feature>
<feature type="active site" description="Nucleophile">
    <location>
        <position position="139"/>
    </location>
</feature>
<feature type="binding site" evidence="1">
    <location>
        <begin position="55"/>
        <end position="56"/>
    </location>
    <ligand>
        <name>FMN</name>
        <dbReference type="ChEBI" id="CHEBI:58210"/>
    </ligand>
</feature>
<feature type="binding site" evidence="1">
    <location>
        <position position="55"/>
    </location>
    <ligand>
        <name>substrate</name>
    </ligand>
</feature>
<feature type="binding site" evidence="1">
    <location>
        <begin position="79"/>
        <end position="83"/>
    </location>
    <ligand>
        <name>substrate</name>
    </ligand>
</feature>
<feature type="binding site" evidence="1">
    <location>
        <position position="136"/>
    </location>
    <ligand>
        <name>FMN</name>
        <dbReference type="ChEBI" id="CHEBI:58210"/>
    </ligand>
</feature>
<feature type="binding site" evidence="1">
    <location>
        <position position="136"/>
    </location>
    <ligand>
        <name>substrate</name>
    </ligand>
</feature>
<feature type="binding site" evidence="1">
    <location>
        <position position="174"/>
    </location>
    <ligand>
        <name>FMN</name>
        <dbReference type="ChEBI" id="CHEBI:58210"/>
    </ligand>
</feature>
<feature type="binding site" evidence="1">
    <location>
        <position position="200"/>
    </location>
    <ligand>
        <name>FMN</name>
        <dbReference type="ChEBI" id="CHEBI:58210"/>
    </ligand>
</feature>
<feature type="binding site" evidence="1">
    <location>
        <begin position="201"/>
        <end position="202"/>
    </location>
    <ligand>
        <name>substrate</name>
    </ligand>
</feature>
<feature type="binding site" evidence="1">
    <location>
        <position position="226"/>
    </location>
    <ligand>
        <name>FMN</name>
        <dbReference type="ChEBI" id="CHEBI:58210"/>
    </ligand>
</feature>
<feature type="binding site" evidence="1">
    <location>
        <begin position="252"/>
        <end position="253"/>
    </location>
    <ligand>
        <name>FMN</name>
        <dbReference type="ChEBI" id="CHEBI:58210"/>
    </ligand>
</feature>
<feature type="binding site" evidence="1">
    <location>
        <begin position="274"/>
        <end position="275"/>
    </location>
    <ligand>
        <name>FMN</name>
        <dbReference type="ChEBI" id="CHEBI:58210"/>
    </ligand>
</feature>
<comment type="function">
    <text evidence="1">Catalyzes the conversion of dihydroorotate to orotate with NAD(+) as electron acceptor.</text>
</comment>
<comment type="catalytic activity">
    <reaction>
        <text>(S)-dihydroorotate + NAD(+) = orotate + NADH + H(+)</text>
        <dbReference type="Rhea" id="RHEA:13513"/>
        <dbReference type="ChEBI" id="CHEBI:15378"/>
        <dbReference type="ChEBI" id="CHEBI:30839"/>
        <dbReference type="ChEBI" id="CHEBI:30864"/>
        <dbReference type="ChEBI" id="CHEBI:57540"/>
        <dbReference type="ChEBI" id="CHEBI:57945"/>
        <dbReference type="EC" id="1.3.1.14"/>
    </reaction>
</comment>
<comment type="cofactor">
    <cofactor evidence="1">
        <name>FMN</name>
        <dbReference type="ChEBI" id="CHEBI:58210"/>
    </cofactor>
    <text evidence="1">Binds 1 FMN per subunit.</text>
</comment>
<comment type="pathway">
    <text>Pyrimidine metabolism; UMP biosynthesis via de novo pathway; orotate from (S)-dihydroorotate (NAD(+) route): step 1/1.</text>
</comment>
<comment type="subunit">
    <text evidence="1">Heterotetramer of 2 PyrK and 2 PyrD type B subunits.</text>
</comment>
<comment type="subcellular location">
    <subcellularLocation>
        <location evidence="1">Cytoplasm</location>
    </subcellularLocation>
</comment>
<comment type="similarity">
    <text evidence="2">Belongs to the dihydroorotate dehydrogenase family. Type 1 subfamily.</text>
</comment>
<keyword id="KW-0963">Cytoplasm</keyword>
<keyword id="KW-0285">Flavoprotein</keyword>
<keyword id="KW-0288">FMN</keyword>
<keyword id="KW-0520">NAD</keyword>
<keyword id="KW-0560">Oxidoreductase</keyword>
<keyword id="KW-0665">Pyrimidine biosynthesis</keyword>
<dbReference type="EC" id="1.3.1.14"/>
<dbReference type="EMBL" id="AE008384">
    <property type="protein sequence ID" value="AAM31441.1"/>
    <property type="molecule type" value="Genomic_DNA"/>
</dbReference>
<dbReference type="SMR" id="Q8PW56"/>
<dbReference type="KEGG" id="mma:MM_1745"/>
<dbReference type="PATRIC" id="fig|192952.21.peg.2021"/>
<dbReference type="eggNOG" id="arCOG00603">
    <property type="taxonomic scope" value="Archaea"/>
</dbReference>
<dbReference type="HOGENOM" id="CLU_042042_0_1_2"/>
<dbReference type="UniPathway" id="UPA00070">
    <property type="reaction ID" value="UER00945"/>
</dbReference>
<dbReference type="Proteomes" id="UP000000595">
    <property type="component" value="Chromosome"/>
</dbReference>
<dbReference type="GO" id="GO:0005737">
    <property type="term" value="C:cytoplasm"/>
    <property type="evidence" value="ECO:0007669"/>
    <property type="project" value="UniProtKB-SubCell"/>
</dbReference>
<dbReference type="GO" id="GO:0004589">
    <property type="term" value="F:dihydroorotate dehydrogenase (NAD+) activity"/>
    <property type="evidence" value="ECO:0007669"/>
    <property type="project" value="UniProtKB-EC"/>
</dbReference>
<dbReference type="GO" id="GO:0006207">
    <property type="term" value="P:'de novo' pyrimidine nucleobase biosynthetic process"/>
    <property type="evidence" value="ECO:0007669"/>
    <property type="project" value="InterPro"/>
</dbReference>
<dbReference type="GO" id="GO:0044205">
    <property type="term" value="P:'de novo' UMP biosynthetic process"/>
    <property type="evidence" value="ECO:0007669"/>
    <property type="project" value="UniProtKB-UniRule"/>
</dbReference>
<dbReference type="CDD" id="cd04740">
    <property type="entry name" value="DHOD_1B_like"/>
    <property type="match status" value="1"/>
</dbReference>
<dbReference type="FunFam" id="3.20.20.70:FF:000027">
    <property type="entry name" value="Dihydropyrimidine dehydrogenase [NADP(+)]"/>
    <property type="match status" value="1"/>
</dbReference>
<dbReference type="Gene3D" id="3.20.20.70">
    <property type="entry name" value="Aldolase class I"/>
    <property type="match status" value="1"/>
</dbReference>
<dbReference type="HAMAP" id="MF_00224">
    <property type="entry name" value="DHO_dh_type1"/>
    <property type="match status" value="1"/>
</dbReference>
<dbReference type="InterPro" id="IPR013785">
    <property type="entry name" value="Aldolase_TIM"/>
</dbReference>
<dbReference type="InterPro" id="IPR050074">
    <property type="entry name" value="DHO_dehydrogenase"/>
</dbReference>
<dbReference type="InterPro" id="IPR033888">
    <property type="entry name" value="DHOD_1B"/>
</dbReference>
<dbReference type="InterPro" id="IPR024920">
    <property type="entry name" value="Dihydroorotate_DH_1"/>
</dbReference>
<dbReference type="InterPro" id="IPR012135">
    <property type="entry name" value="Dihydroorotate_DH_1_2"/>
</dbReference>
<dbReference type="InterPro" id="IPR005720">
    <property type="entry name" value="Dihydroorotate_DH_cat"/>
</dbReference>
<dbReference type="InterPro" id="IPR001295">
    <property type="entry name" value="Dihydroorotate_DH_CS"/>
</dbReference>
<dbReference type="InterPro" id="IPR049622">
    <property type="entry name" value="Dihydroorotate_DH_I"/>
</dbReference>
<dbReference type="NCBIfam" id="NF005574">
    <property type="entry name" value="PRK07259.1"/>
    <property type="match status" value="1"/>
</dbReference>
<dbReference type="NCBIfam" id="TIGR01037">
    <property type="entry name" value="pyrD_sub1_fam"/>
    <property type="match status" value="1"/>
</dbReference>
<dbReference type="PANTHER" id="PTHR48109:SF1">
    <property type="entry name" value="DIHYDROOROTATE DEHYDROGENASE (FUMARATE)"/>
    <property type="match status" value="1"/>
</dbReference>
<dbReference type="PANTHER" id="PTHR48109">
    <property type="entry name" value="DIHYDROOROTATE DEHYDROGENASE (QUINONE), MITOCHONDRIAL-RELATED"/>
    <property type="match status" value="1"/>
</dbReference>
<dbReference type="Pfam" id="PF01180">
    <property type="entry name" value="DHO_dh"/>
    <property type="match status" value="1"/>
</dbReference>
<dbReference type="PIRSF" id="PIRSF000164">
    <property type="entry name" value="DHO_oxidase"/>
    <property type="match status" value="1"/>
</dbReference>
<dbReference type="SUPFAM" id="SSF51395">
    <property type="entry name" value="FMN-linked oxidoreductases"/>
    <property type="match status" value="1"/>
</dbReference>
<dbReference type="PROSITE" id="PS00912">
    <property type="entry name" value="DHODEHASE_2"/>
    <property type="match status" value="1"/>
</dbReference>
<gene>
    <name type="primary">pyrD</name>
    <name type="ordered locus">MM_1745</name>
</gene>
<name>PYRDB_METMA</name>
<reference key="1">
    <citation type="journal article" date="2002" name="J. Mol. Microbiol. Biotechnol.">
        <title>The genome of Methanosarcina mazei: evidence for lateral gene transfer between Bacteria and Archaea.</title>
        <authorList>
            <person name="Deppenmeier U."/>
            <person name="Johann A."/>
            <person name="Hartsch T."/>
            <person name="Merkl R."/>
            <person name="Schmitz R.A."/>
            <person name="Martinez-Arias R."/>
            <person name="Henne A."/>
            <person name="Wiezer A."/>
            <person name="Baeumer S."/>
            <person name="Jacobi C."/>
            <person name="Brueggemann H."/>
            <person name="Lienard T."/>
            <person name="Christmann A."/>
            <person name="Boemecke M."/>
            <person name="Steckel S."/>
            <person name="Bhattacharyya A."/>
            <person name="Lykidis A."/>
            <person name="Overbeek R."/>
            <person name="Klenk H.-P."/>
            <person name="Gunsalus R.P."/>
            <person name="Fritz H.-J."/>
            <person name="Gottschalk G."/>
        </authorList>
    </citation>
    <scope>NUCLEOTIDE SEQUENCE [LARGE SCALE GENOMIC DNA]</scope>
    <source>
        <strain>ATCC BAA-159 / DSM 3647 / Goe1 / Go1 / JCM 11833 / OCM 88</strain>
    </source>
</reference>
<proteinExistence type="inferred from homology"/>
<organism>
    <name type="scientific">Methanosarcina mazei (strain ATCC BAA-159 / DSM 3647 / Goe1 / Go1 / JCM 11833 / OCM 88)</name>
    <name type="common">Methanosarcina frisia</name>
    <dbReference type="NCBI Taxonomy" id="192952"/>
    <lineage>
        <taxon>Archaea</taxon>
        <taxon>Methanobacteriati</taxon>
        <taxon>Methanobacteriota</taxon>
        <taxon>Stenosarchaea group</taxon>
        <taxon>Methanomicrobia</taxon>
        <taxon>Methanosarcinales</taxon>
        <taxon>Methanosarcinaceae</taxon>
        <taxon>Methanosarcina</taxon>
    </lineage>
</organism>